<reference key="1">
    <citation type="journal article" date="2003" name="J. Bacteriol.">
        <title>Complete genome sequence of the oral pathogenic bacterium Porphyromonas gingivalis strain W83.</title>
        <authorList>
            <person name="Nelson K.E."/>
            <person name="Fleischmann R.D."/>
            <person name="DeBoy R.T."/>
            <person name="Paulsen I.T."/>
            <person name="Fouts D.E."/>
            <person name="Eisen J.A."/>
            <person name="Daugherty S.C."/>
            <person name="Dodson R.J."/>
            <person name="Durkin A.S."/>
            <person name="Gwinn M.L."/>
            <person name="Haft D.H."/>
            <person name="Kolonay J.F."/>
            <person name="Nelson W.C."/>
            <person name="Mason T.M."/>
            <person name="Tallon L."/>
            <person name="Gray J."/>
            <person name="Granger D."/>
            <person name="Tettelin H."/>
            <person name="Dong H."/>
            <person name="Galvin J.L."/>
            <person name="Duncan M.J."/>
            <person name="Dewhirst F.E."/>
            <person name="Fraser C.M."/>
        </authorList>
    </citation>
    <scope>NUCLEOTIDE SEQUENCE [LARGE SCALE GENOMIC DNA]</scope>
    <source>
        <strain>ATCC BAA-308 / W83</strain>
    </source>
</reference>
<protein>
    <recommendedName>
        <fullName evidence="1">UPF0597 protein PG_0909</fullName>
    </recommendedName>
</protein>
<organism>
    <name type="scientific">Porphyromonas gingivalis (strain ATCC BAA-308 / W83)</name>
    <dbReference type="NCBI Taxonomy" id="242619"/>
    <lineage>
        <taxon>Bacteria</taxon>
        <taxon>Pseudomonadati</taxon>
        <taxon>Bacteroidota</taxon>
        <taxon>Bacteroidia</taxon>
        <taxon>Bacteroidales</taxon>
        <taxon>Porphyromonadaceae</taxon>
        <taxon>Porphyromonas</taxon>
    </lineage>
</organism>
<accession>Q7MVW8</accession>
<sequence length="433" mass="45825">MDTSTQQRIISLIKKEVVPATGCTEPVAVALAAAQAASLMEQRPDHVEVLLSPNILKNAMGVGIPGTGMIGLPIAIALGIVVADPTKQLKVLDGIAPEQLEEAKKIVDGKIIQVAVKQGDIDKLYIEINMSAGSESASTIIEKIHTNIIYAAHNGQVVIDGRHDAADKSESASSESEEEIALSFEMVYDFAMNTPTEEIEFILEAARLNRHASEVSMKGNYGHAVGRMIQGSLGRRYLGDSSLTRMLTYTSSACDARMDGAPVTVMSNSGSGNQGITATLPVLSFAEDEQADHERTVRALVLSNLMVIYIKQKLGRLSALCGCVVAATGSSCGLCYLMGGTKEQIGFAIKNMIGNITGMLCDGAKPSCSMKVSSGVSSAMFSALLAMEKKVVTSNEGIVDDDVDQSIDNLTSIGRDGMNATDTLVLNIMTSKK</sequence>
<name>Y909_PORGI</name>
<comment type="similarity">
    <text evidence="1">Belongs to the UPF0597 family.</text>
</comment>
<dbReference type="EMBL" id="AE015924">
    <property type="protein sequence ID" value="AAQ66048.1"/>
    <property type="molecule type" value="Genomic_DNA"/>
</dbReference>
<dbReference type="RefSeq" id="WP_004584141.1">
    <property type="nucleotide sequence ID" value="NC_002950.2"/>
</dbReference>
<dbReference type="SMR" id="Q7MVW8"/>
<dbReference type="STRING" id="242619.PG_0909"/>
<dbReference type="EnsemblBacteria" id="AAQ66048">
    <property type="protein sequence ID" value="AAQ66048"/>
    <property type="gene ID" value="PG_0909"/>
</dbReference>
<dbReference type="KEGG" id="pgi:PG_0909"/>
<dbReference type="PATRIC" id="fig|242619.8.peg.839"/>
<dbReference type="eggNOG" id="COG3681">
    <property type="taxonomic scope" value="Bacteria"/>
</dbReference>
<dbReference type="HOGENOM" id="CLU_051840_0_0_10"/>
<dbReference type="BioCyc" id="PGIN242619:G1G02-845-MONOMER"/>
<dbReference type="Proteomes" id="UP000000588">
    <property type="component" value="Chromosome"/>
</dbReference>
<dbReference type="GO" id="GO:0080146">
    <property type="term" value="F:L-cysteine desulfhydrase activity"/>
    <property type="evidence" value="ECO:0007669"/>
    <property type="project" value="TreeGrafter"/>
</dbReference>
<dbReference type="GO" id="GO:0019450">
    <property type="term" value="P:L-cysteine catabolic process to pyruvate"/>
    <property type="evidence" value="ECO:0007669"/>
    <property type="project" value="TreeGrafter"/>
</dbReference>
<dbReference type="HAMAP" id="MF_01845">
    <property type="entry name" value="UPF0597"/>
    <property type="match status" value="1"/>
</dbReference>
<dbReference type="InterPro" id="IPR005130">
    <property type="entry name" value="Ser_deHydtase-like_asu"/>
</dbReference>
<dbReference type="InterPro" id="IPR021144">
    <property type="entry name" value="UPF0597"/>
</dbReference>
<dbReference type="PANTHER" id="PTHR30501">
    <property type="entry name" value="UPF0597 PROTEIN YHAM"/>
    <property type="match status" value="1"/>
</dbReference>
<dbReference type="PANTHER" id="PTHR30501:SF2">
    <property type="entry name" value="UPF0597 PROTEIN YHAM"/>
    <property type="match status" value="1"/>
</dbReference>
<dbReference type="Pfam" id="PF03313">
    <property type="entry name" value="SDH_alpha"/>
    <property type="match status" value="1"/>
</dbReference>
<dbReference type="PIRSF" id="PIRSF006054">
    <property type="entry name" value="UCP006054"/>
    <property type="match status" value="1"/>
</dbReference>
<keyword id="KW-1185">Reference proteome</keyword>
<proteinExistence type="inferred from homology"/>
<feature type="chain" id="PRO_0000339836" description="UPF0597 protein PG_0909">
    <location>
        <begin position="1"/>
        <end position="433"/>
    </location>
</feature>
<gene>
    <name type="ordered locus">PG_0909</name>
</gene>
<evidence type="ECO:0000255" key="1">
    <source>
        <dbReference type="HAMAP-Rule" id="MF_01845"/>
    </source>
</evidence>